<protein>
    <recommendedName>
        <fullName evidence="1">GTPase Era</fullName>
    </recommendedName>
</protein>
<accession>P0A3C2</accession>
<accession>A2RI82</accession>
<accession>Q9KIH7</accession>
<keyword id="KW-1003">Cell membrane</keyword>
<keyword id="KW-0963">Cytoplasm</keyword>
<keyword id="KW-0342">GTP-binding</keyword>
<keyword id="KW-0472">Membrane</keyword>
<keyword id="KW-0547">Nucleotide-binding</keyword>
<keyword id="KW-0690">Ribosome biogenesis</keyword>
<keyword id="KW-0694">RNA-binding</keyword>
<keyword id="KW-0699">rRNA-binding</keyword>
<dbReference type="EMBL" id="AF233268">
    <property type="protein sequence ID" value="AAF73946.1"/>
    <property type="molecule type" value="Genomic_DNA"/>
</dbReference>
<dbReference type="EMBL" id="AM406671">
    <property type="protein sequence ID" value="CAL96976.1"/>
    <property type="molecule type" value="Genomic_DNA"/>
</dbReference>
<dbReference type="RefSeq" id="WP_003131632.1">
    <property type="nucleotide sequence ID" value="NZ_WJVF01000001.1"/>
</dbReference>
<dbReference type="SMR" id="P0A3C2"/>
<dbReference type="STRING" id="416870.llmg_0371"/>
<dbReference type="GeneID" id="89632529"/>
<dbReference type="KEGG" id="llm:llmg_0371"/>
<dbReference type="eggNOG" id="COG1159">
    <property type="taxonomic scope" value="Bacteria"/>
</dbReference>
<dbReference type="HOGENOM" id="CLU_038009_1_0_9"/>
<dbReference type="OrthoDB" id="9805918at2"/>
<dbReference type="PhylomeDB" id="P0A3C2"/>
<dbReference type="Proteomes" id="UP000000364">
    <property type="component" value="Chromosome"/>
</dbReference>
<dbReference type="GO" id="GO:0005829">
    <property type="term" value="C:cytosol"/>
    <property type="evidence" value="ECO:0007669"/>
    <property type="project" value="TreeGrafter"/>
</dbReference>
<dbReference type="GO" id="GO:0005886">
    <property type="term" value="C:plasma membrane"/>
    <property type="evidence" value="ECO:0007669"/>
    <property type="project" value="UniProtKB-SubCell"/>
</dbReference>
<dbReference type="GO" id="GO:0005525">
    <property type="term" value="F:GTP binding"/>
    <property type="evidence" value="ECO:0007669"/>
    <property type="project" value="UniProtKB-UniRule"/>
</dbReference>
<dbReference type="GO" id="GO:0003924">
    <property type="term" value="F:GTPase activity"/>
    <property type="evidence" value="ECO:0007669"/>
    <property type="project" value="UniProtKB-UniRule"/>
</dbReference>
<dbReference type="GO" id="GO:0043024">
    <property type="term" value="F:ribosomal small subunit binding"/>
    <property type="evidence" value="ECO:0007669"/>
    <property type="project" value="TreeGrafter"/>
</dbReference>
<dbReference type="GO" id="GO:0070181">
    <property type="term" value="F:small ribosomal subunit rRNA binding"/>
    <property type="evidence" value="ECO:0007669"/>
    <property type="project" value="UniProtKB-UniRule"/>
</dbReference>
<dbReference type="GO" id="GO:0000028">
    <property type="term" value="P:ribosomal small subunit assembly"/>
    <property type="evidence" value="ECO:0007669"/>
    <property type="project" value="TreeGrafter"/>
</dbReference>
<dbReference type="CDD" id="cd04163">
    <property type="entry name" value="Era"/>
    <property type="match status" value="1"/>
</dbReference>
<dbReference type="CDD" id="cd22534">
    <property type="entry name" value="KH-II_Era"/>
    <property type="match status" value="1"/>
</dbReference>
<dbReference type="FunFam" id="3.30.300.20:FF:000003">
    <property type="entry name" value="GTPase Era"/>
    <property type="match status" value="1"/>
</dbReference>
<dbReference type="FunFam" id="3.40.50.300:FF:000094">
    <property type="entry name" value="GTPase Era"/>
    <property type="match status" value="1"/>
</dbReference>
<dbReference type="Gene3D" id="3.30.300.20">
    <property type="match status" value="1"/>
</dbReference>
<dbReference type="Gene3D" id="3.40.50.300">
    <property type="entry name" value="P-loop containing nucleotide triphosphate hydrolases"/>
    <property type="match status" value="1"/>
</dbReference>
<dbReference type="HAMAP" id="MF_00367">
    <property type="entry name" value="GTPase_Era"/>
    <property type="match status" value="1"/>
</dbReference>
<dbReference type="InterPro" id="IPR030388">
    <property type="entry name" value="G_ERA_dom"/>
</dbReference>
<dbReference type="InterPro" id="IPR006073">
    <property type="entry name" value="GTP-bd"/>
</dbReference>
<dbReference type="InterPro" id="IPR005662">
    <property type="entry name" value="GTPase_Era-like"/>
</dbReference>
<dbReference type="InterPro" id="IPR015946">
    <property type="entry name" value="KH_dom-like_a/b"/>
</dbReference>
<dbReference type="InterPro" id="IPR004044">
    <property type="entry name" value="KH_dom_type_2"/>
</dbReference>
<dbReference type="InterPro" id="IPR009019">
    <property type="entry name" value="KH_sf_prok-type"/>
</dbReference>
<dbReference type="InterPro" id="IPR027417">
    <property type="entry name" value="P-loop_NTPase"/>
</dbReference>
<dbReference type="InterPro" id="IPR005225">
    <property type="entry name" value="Small_GTP-bd"/>
</dbReference>
<dbReference type="NCBIfam" id="TIGR00436">
    <property type="entry name" value="era"/>
    <property type="match status" value="1"/>
</dbReference>
<dbReference type="NCBIfam" id="NF000908">
    <property type="entry name" value="PRK00089.1"/>
    <property type="match status" value="1"/>
</dbReference>
<dbReference type="NCBIfam" id="TIGR00231">
    <property type="entry name" value="small_GTP"/>
    <property type="match status" value="1"/>
</dbReference>
<dbReference type="PANTHER" id="PTHR42698">
    <property type="entry name" value="GTPASE ERA"/>
    <property type="match status" value="1"/>
</dbReference>
<dbReference type="PANTHER" id="PTHR42698:SF1">
    <property type="entry name" value="GTPASE ERA, MITOCHONDRIAL"/>
    <property type="match status" value="1"/>
</dbReference>
<dbReference type="Pfam" id="PF07650">
    <property type="entry name" value="KH_2"/>
    <property type="match status" value="1"/>
</dbReference>
<dbReference type="Pfam" id="PF01926">
    <property type="entry name" value="MMR_HSR1"/>
    <property type="match status" value="1"/>
</dbReference>
<dbReference type="SUPFAM" id="SSF52540">
    <property type="entry name" value="P-loop containing nucleoside triphosphate hydrolases"/>
    <property type="match status" value="1"/>
</dbReference>
<dbReference type="SUPFAM" id="SSF54814">
    <property type="entry name" value="Prokaryotic type KH domain (KH-domain type II)"/>
    <property type="match status" value="1"/>
</dbReference>
<dbReference type="PROSITE" id="PS51713">
    <property type="entry name" value="G_ERA"/>
    <property type="match status" value="1"/>
</dbReference>
<dbReference type="PROSITE" id="PS50823">
    <property type="entry name" value="KH_TYPE_2"/>
    <property type="match status" value="1"/>
</dbReference>
<name>ERA_LACLM</name>
<comment type="function">
    <text evidence="1">An essential GTPase that binds both GDP and GTP, with rapid nucleotide exchange. Plays a role in 16S rRNA processing and 30S ribosomal subunit biogenesis and possibly also in cell cycle regulation and energy metabolism.</text>
</comment>
<comment type="subunit">
    <text evidence="1">Monomer.</text>
</comment>
<comment type="subcellular location">
    <subcellularLocation>
        <location>Cytoplasm</location>
    </subcellularLocation>
    <subcellularLocation>
        <location evidence="1">Cell membrane</location>
        <topology evidence="1">Peripheral membrane protein</topology>
    </subcellularLocation>
</comment>
<comment type="similarity">
    <text evidence="1 2">Belongs to the TRAFAC class TrmE-Era-EngA-EngB-Septin-like GTPase superfamily. Era GTPase family.</text>
</comment>
<feature type="chain" id="PRO_0000180021" description="GTPase Era">
    <location>
        <begin position="1"/>
        <end position="303"/>
    </location>
</feature>
<feature type="domain" description="Era-type G" evidence="2">
    <location>
        <begin position="7"/>
        <end position="174"/>
    </location>
</feature>
<feature type="domain" description="KH type-2" evidence="1">
    <location>
        <begin position="205"/>
        <end position="283"/>
    </location>
</feature>
<feature type="region of interest" description="G1" evidence="2">
    <location>
        <begin position="15"/>
        <end position="22"/>
    </location>
</feature>
<feature type="region of interest" description="G2" evidence="2">
    <location>
        <begin position="41"/>
        <end position="45"/>
    </location>
</feature>
<feature type="region of interest" description="G3" evidence="2">
    <location>
        <begin position="62"/>
        <end position="65"/>
    </location>
</feature>
<feature type="region of interest" description="G4" evidence="2">
    <location>
        <begin position="124"/>
        <end position="127"/>
    </location>
</feature>
<feature type="region of interest" description="G5" evidence="2">
    <location>
        <begin position="153"/>
        <end position="155"/>
    </location>
</feature>
<feature type="binding site" evidence="1">
    <location>
        <begin position="15"/>
        <end position="22"/>
    </location>
    <ligand>
        <name>GTP</name>
        <dbReference type="ChEBI" id="CHEBI:37565"/>
    </ligand>
</feature>
<feature type="binding site" evidence="1">
    <location>
        <begin position="62"/>
        <end position="66"/>
    </location>
    <ligand>
        <name>GTP</name>
        <dbReference type="ChEBI" id="CHEBI:37565"/>
    </ligand>
</feature>
<feature type="binding site" evidence="1">
    <location>
        <begin position="124"/>
        <end position="127"/>
    </location>
    <ligand>
        <name>GTP</name>
        <dbReference type="ChEBI" id="CHEBI:37565"/>
    </ligand>
</feature>
<proteinExistence type="inferred from homology"/>
<gene>
    <name evidence="1" type="primary">era</name>
    <name type="synonym">eraL</name>
    <name type="ordered locus">llmg_0371</name>
</gene>
<organism>
    <name type="scientific">Lactococcus lactis subsp. cremoris (strain MG1363)</name>
    <dbReference type="NCBI Taxonomy" id="416870"/>
    <lineage>
        <taxon>Bacteria</taxon>
        <taxon>Bacillati</taxon>
        <taxon>Bacillota</taxon>
        <taxon>Bacilli</taxon>
        <taxon>Lactobacillales</taxon>
        <taxon>Streptococcaceae</taxon>
        <taxon>Lactococcus</taxon>
        <taxon>Lactococcus cremoris subsp. cremoris</taxon>
    </lineage>
</organism>
<sequence>MTNNKFKSGFVAILGRPNVGKSTFMNHVMGQKIAIMSDKPQTTRNKIQGIYTTENEQIVFIDTPGIHKPHNALGDFMVQSAYSTLRECDVVLFMVAADEPRSTGENMIIERLKKAEVPVILVVNKIDKIHPDRLFEIVADYTSQMEFSEVVPISAKQGNNTERLIDTLSEKLDEGPQYFPEDQITDHPERFLVSEMIREKILLLTREEVPHSIAVTTDQMTRDEETGKIHIMATIIVERKSQKGIILGKGGDMIRKIGKMARRDIEIMLGDKVYLETWVKIKNDWRDRKMDLADFGYNRDDYM</sequence>
<evidence type="ECO:0000255" key="1">
    <source>
        <dbReference type="HAMAP-Rule" id="MF_00367"/>
    </source>
</evidence>
<evidence type="ECO:0000255" key="2">
    <source>
        <dbReference type="PROSITE-ProRule" id="PRU01050"/>
    </source>
</evidence>
<reference key="1">
    <citation type="journal article" date="2000" name="Nucleic Acids Res.">
        <title>Rapid genome walking: a simplified oligo-cassette mediated polymerase chain reaction using a single genome-specific primer.</title>
        <authorList>
            <person name="Kilstrup M."/>
            <person name="Kristiansen K.N."/>
        </authorList>
    </citation>
    <scope>NUCLEOTIDE SEQUENCE [GENOMIC DNA]</scope>
</reference>
<reference key="2">
    <citation type="journal article" date="2007" name="J. Bacteriol.">
        <title>The complete genome sequence of the lactic acid bacterial paradigm Lactococcus lactis subsp. cremoris MG1363.</title>
        <authorList>
            <person name="Wegmann U."/>
            <person name="O'Connell-Motherway M."/>
            <person name="Zomer A."/>
            <person name="Buist G."/>
            <person name="Shearman C."/>
            <person name="Canchaya C."/>
            <person name="Ventura M."/>
            <person name="Goesmann A."/>
            <person name="Gasson M.J."/>
            <person name="Kuipers O.P."/>
            <person name="van Sinderen D."/>
            <person name="Kok J."/>
        </authorList>
    </citation>
    <scope>NUCLEOTIDE SEQUENCE [LARGE SCALE GENOMIC DNA]</scope>
    <source>
        <strain>MG1363</strain>
    </source>
</reference>